<name>ABH_BACSU</name>
<organism>
    <name type="scientific">Bacillus subtilis (strain 168)</name>
    <dbReference type="NCBI Taxonomy" id="224308"/>
    <lineage>
        <taxon>Bacteria</taxon>
        <taxon>Bacillati</taxon>
        <taxon>Bacillota</taxon>
        <taxon>Bacilli</taxon>
        <taxon>Bacillales</taxon>
        <taxon>Bacillaceae</taxon>
        <taxon>Bacillus</taxon>
    </lineage>
</organism>
<sequence>MKSIGVVRKVDELGRIVMPIELRRALDIAIKDSIEFFVDGDKIILKKYKPHGVCLMTGEITSENKEYGNGKITLSPEGAQLLLEEIQAALKE</sequence>
<comment type="similarity">
    <text evidence="2">To B.subtilis AbrB and SpoVT.</text>
</comment>
<protein>
    <recommendedName>
        <fullName>Putative transition state regulator Abh</fullName>
    </recommendedName>
</protein>
<accession>P39758</accession>
<dbReference type="EMBL" id="D37798">
    <property type="protein sequence ID" value="BAA07044.1"/>
    <property type="molecule type" value="Genomic_DNA"/>
</dbReference>
<dbReference type="EMBL" id="D37799">
    <property type="protein sequence ID" value="BAA07048.1"/>
    <property type="molecule type" value="Genomic_DNA"/>
</dbReference>
<dbReference type="EMBL" id="AF012285">
    <property type="protein sequence ID" value="AAC24923.1"/>
    <property type="molecule type" value="Genomic_DNA"/>
</dbReference>
<dbReference type="EMBL" id="AL009126">
    <property type="protein sequence ID" value="CAB13321.1"/>
    <property type="molecule type" value="Genomic_DNA"/>
</dbReference>
<dbReference type="PIR" id="I39925">
    <property type="entry name" value="I39925"/>
</dbReference>
<dbReference type="PDB" id="2FY9">
    <property type="method" value="NMR"/>
    <property type="chains" value="A/B=1-54"/>
</dbReference>
<dbReference type="PDB" id="2RO3">
    <property type="method" value="NMR"/>
    <property type="chains" value="A/B=1-54"/>
</dbReference>
<dbReference type="PDBsum" id="2FY9"/>
<dbReference type="PDBsum" id="2RO3"/>
<dbReference type="BMRB" id="P39758"/>
<dbReference type="SMR" id="P39758"/>
<dbReference type="DIP" id="DIP-46334N"/>
<dbReference type="FunCoup" id="P39758">
    <property type="interactions" value="69"/>
</dbReference>
<dbReference type="STRING" id="224308.BSU14480"/>
<dbReference type="jPOST" id="P39758"/>
<dbReference type="PaxDb" id="224308-BSU14480"/>
<dbReference type="EnsemblBacteria" id="CAB13321">
    <property type="protein sequence ID" value="CAB13321"/>
    <property type="gene ID" value="BSU_14480"/>
</dbReference>
<dbReference type="GeneID" id="938738"/>
<dbReference type="KEGG" id="bsu:BSU14480"/>
<dbReference type="PATRIC" id="fig|224308.179.peg.1578"/>
<dbReference type="eggNOG" id="COG2002">
    <property type="taxonomic scope" value="Bacteria"/>
</dbReference>
<dbReference type="InParanoid" id="P39758"/>
<dbReference type="OrthoDB" id="9782993at2"/>
<dbReference type="PhylomeDB" id="P39758"/>
<dbReference type="BioCyc" id="BSUB:BSU14480-MONOMER"/>
<dbReference type="EvolutionaryTrace" id="P39758"/>
<dbReference type="Proteomes" id="UP000001570">
    <property type="component" value="Chromosome"/>
</dbReference>
<dbReference type="GO" id="GO:0003677">
    <property type="term" value="F:DNA binding"/>
    <property type="evidence" value="ECO:0007669"/>
    <property type="project" value="UniProtKB-KW"/>
</dbReference>
<dbReference type="Gene3D" id="2.10.260.10">
    <property type="match status" value="1"/>
</dbReference>
<dbReference type="InterPro" id="IPR040678">
    <property type="entry name" value="AbrB_C"/>
</dbReference>
<dbReference type="InterPro" id="IPR052731">
    <property type="entry name" value="B_subtilis_Trans_State_Reg"/>
</dbReference>
<dbReference type="InterPro" id="IPR007159">
    <property type="entry name" value="SpoVT-AbrB_dom"/>
</dbReference>
<dbReference type="InterPro" id="IPR037914">
    <property type="entry name" value="SpoVT-AbrB_sf"/>
</dbReference>
<dbReference type="NCBIfam" id="TIGR01439">
    <property type="entry name" value="lp_hng_hel_AbrB"/>
    <property type="match status" value="1"/>
</dbReference>
<dbReference type="PANTHER" id="PTHR36432">
    <property type="match status" value="1"/>
</dbReference>
<dbReference type="PANTHER" id="PTHR36432:SF4">
    <property type="entry name" value="TRANSITION STATE REGULATOR ABH-RELATED"/>
    <property type="match status" value="1"/>
</dbReference>
<dbReference type="Pfam" id="PF18277">
    <property type="entry name" value="AbrB_C"/>
    <property type="match status" value="1"/>
</dbReference>
<dbReference type="Pfam" id="PF04014">
    <property type="entry name" value="MazE_antitoxin"/>
    <property type="match status" value="1"/>
</dbReference>
<dbReference type="SMART" id="SM00966">
    <property type="entry name" value="SpoVT_AbrB"/>
    <property type="match status" value="1"/>
</dbReference>
<dbReference type="SUPFAM" id="SSF89447">
    <property type="entry name" value="AbrB/MazE/MraZ-like"/>
    <property type="match status" value="1"/>
</dbReference>
<dbReference type="PROSITE" id="PS51740">
    <property type="entry name" value="SPOVT_ABRB"/>
    <property type="match status" value="1"/>
</dbReference>
<evidence type="ECO:0000255" key="1">
    <source>
        <dbReference type="PROSITE-ProRule" id="PRU01076"/>
    </source>
</evidence>
<evidence type="ECO:0000305" key="2"/>
<evidence type="ECO:0007829" key="3">
    <source>
        <dbReference type="PDB" id="2FY9"/>
    </source>
</evidence>
<keyword id="KW-0002">3D-structure</keyword>
<keyword id="KW-0238">DNA-binding</keyword>
<keyword id="KW-1185">Reference proteome</keyword>
<keyword id="KW-0804">Transcription</keyword>
<keyword id="KW-0805">Transcription regulation</keyword>
<reference key="1">
    <citation type="journal article" date="1995" name="J. Bacteriol.">
        <title>Analysis of a suppressor mutation ssb (kinC) of sur0B20 (spo0A) mutation in Bacillus subtilis reveals that kinC encodes a histidine protein kinase.</title>
        <authorList>
            <person name="Kobayashi K."/>
            <person name="Shoji K."/>
            <person name="Shimizu T."/>
            <person name="Nakano K."/>
            <person name="Sato T."/>
            <person name="Kobayashi Y."/>
        </authorList>
    </citation>
    <scope>NUCLEOTIDE SEQUENCE [GENOMIC DNA]</scope>
    <source>
        <strain>168 / JH642</strain>
    </source>
</reference>
<reference key="2">
    <citation type="journal article" date="1996" name="Microbiology">
        <title>The ampS-nprE (124 degrees-127 degrees) region of the Bacillus subtilis 168 chromosome: sequencing of a 27 kb segment and identification of several genes in the area.</title>
        <authorList>
            <person name="Winters P."/>
            <person name="Caldwell R.M."/>
            <person name="Enfield L."/>
            <person name="Ferrari E."/>
        </authorList>
    </citation>
    <scope>NUCLEOTIDE SEQUENCE [GENOMIC DNA]</scope>
    <source>
        <strain>168</strain>
    </source>
</reference>
<reference key="3">
    <citation type="submission" date="1997-07" db="EMBL/GenBank/DDBJ databases">
        <title>Sequence analysis of the mobA-ampS region of the Bacillus subtilis chromosome.</title>
        <authorList>
            <person name="Caldwell R.M."/>
            <person name="Ferrari E."/>
        </authorList>
    </citation>
    <scope>NUCLEOTIDE SEQUENCE [GENOMIC DNA]</scope>
    <source>
        <strain>168</strain>
    </source>
</reference>
<reference key="4">
    <citation type="journal article" date="1997" name="Nature">
        <title>The complete genome sequence of the Gram-positive bacterium Bacillus subtilis.</title>
        <authorList>
            <person name="Kunst F."/>
            <person name="Ogasawara N."/>
            <person name="Moszer I."/>
            <person name="Albertini A.M."/>
            <person name="Alloni G."/>
            <person name="Azevedo V."/>
            <person name="Bertero M.G."/>
            <person name="Bessieres P."/>
            <person name="Bolotin A."/>
            <person name="Borchert S."/>
            <person name="Borriss R."/>
            <person name="Boursier L."/>
            <person name="Brans A."/>
            <person name="Braun M."/>
            <person name="Brignell S.C."/>
            <person name="Bron S."/>
            <person name="Brouillet S."/>
            <person name="Bruschi C.V."/>
            <person name="Caldwell B."/>
            <person name="Capuano V."/>
            <person name="Carter N.M."/>
            <person name="Choi S.-K."/>
            <person name="Codani J.-J."/>
            <person name="Connerton I.F."/>
            <person name="Cummings N.J."/>
            <person name="Daniel R.A."/>
            <person name="Denizot F."/>
            <person name="Devine K.M."/>
            <person name="Duesterhoeft A."/>
            <person name="Ehrlich S.D."/>
            <person name="Emmerson P.T."/>
            <person name="Entian K.-D."/>
            <person name="Errington J."/>
            <person name="Fabret C."/>
            <person name="Ferrari E."/>
            <person name="Foulger D."/>
            <person name="Fritz C."/>
            <person name="Fujita M."/>
            <person name="Fujita Y."/>
            <person name="Fuma S."/>
            <person name="Galizzi A."/>
            <person name="Galleron N."/>
            <person name="Ghim S.-Y."/>
            <person name="Glaser P."/>
            <person name="Goffeau A."/>
            <person name="Golightly E.J."/>
            <person name="Grandi G."/>
            <person name="Guiseppi G."/>
            <person name="Guy B.J."/>
            <person name="Haga K."/>
            <person name="Haiech J."/>
            <person name="Harwood C.R."/>
            <person name="Henaut A."/>
            <person name="Hilbert H."/>
            <person name="Holsappel S."/>
            <person name="Hosono S."/>
            <person name="Hullo M.-F."/>
            <person name="Itaya M."/>
            <person name="Jones L.-M."/>
            <person name="Joris B."/>
            <person name="Karamata D."/>
            <person name="Kasahara Y."/>
            <person name="Klaerr-Blanchard M."/>
            <person name="Klein C."/>
            <person name="Kobayashi Y."/>
            <person name="Koetter P."/>
            <person name="Koningstein G."/>
            <person name="Krogh S."/>
            <person name="Kumano M."/>
            <person name="Kurita K."/>
            <person name="Lapidus A."/>
            <person name="Lardinois S."/>
            <person name="Lauber J."/>
            <person name="Lazarevic V."/>
            <person name="Lee S.-M."/>
            <person name="Levine A."/>
            <person name="Liu H."/>
            <person name="Masuda S."/>
            <person name="Mauel C."/>
            <person name="Medigue C."/>
            <person name="Medina N."/>
            <person name="Mellado R.P."/>
            <person name="Mizuno M."/>
            <person name="Moestl D."/>
            <person name="Nakai S."/>
            <person name="Noback M."/>
            <person name="Noone D."/>
            <person name="O'Reilly M."/>
            <person name="Ogawa K."/>
            <person name="Ogiwara A."/>
            <person name="Oudega B."/>
            <person name="Park S.-H."/>
            <person name="Parro V."/>
            <person name="Pohl T.M."/>
            <person name="Portetelle D."/>
            <person name="Porwollik S."/>
            <person name="Prescott A.M."/>
            <person name="Presecan E."/>
            <person name="Pujic P."/>
            <person name="Purnelle B."/>
            <person name="Rapoport G."/>
            <person name="Rey M."/>
            <person name="Reynolds S."/>
            <person name="Rieger M."/>
            <person name="Rivolta C."/>
            <person name="Rocha E."/>
            <person name="Roche B."/>
            <person name="Rose M."/>
            <person name="Sadaie Y."/>
            <person name="Sato T."/>
            <person name="Scanlan E."/>
            <person name="Schleich S."/>
            <person name="Schroeter R."/>
            <person name="Scoffone F."/>
            <person name="Sekiguchi J."/>
            <person name="Sekowska A."/>
            <person name="Seror S.J."/>
            <person name="Serror P."/>
            <person name="Shin B.-S."/>
            <person name="Soldo B."/>
            <person name="Sorokin A."/>
            <person name="Tacconi E."/>
            <person name="Takagi T."/>
            <person name="Takahashi H."/>
            <person name="Takemaru K."/>
            <person name="Takeuchi M."/>
            <person name="Tamakoshi A."/>
            <person name="Tanaka T."/>
            <person name="Terpstra P."/>
            <person name="Tognoni A."/>
            <person name="Tosato V."/>
            <person name="Uchiyama S."/>
            <person name="Vandenbol M."/>
            <person name="Vannier F."/>
            <person name="Vassarotti A."/>
            <person name="Viari A."/>
            <person name="Wambutt R."/>
            <person name="Wedler E."/>
            <person name="Wedler H."/>
            <person name="Weitzenegger T."/>
            <person name="Winters P."/>
            <person name="Wipat A."/>
            <person name="Yamamoto H."/>
            <person name="Yamane K."/>
            <person name="Yasumoto K."/>
            <person name="Yata K."/>
            <person name="Yoshida K."/>
            <person name="Yoshikawa H.-F."/>
            <person name="Zumstein E."/>
            <person name="Yoshikawa H."/>
            <person name="Danchin A."/>
        </authorList>
    </citation>
    <scope>NUCLEOTIDE SEQUENCE [LARGE SCALE GENOMIC DNA]</scope>
    <source>
        <strain>168</strain>
    </source>
</reference>
<feature type="chain" id="PRO_0000064423" description="Putative transition state regulator Abh">
    <location>
        <begin position="1"/>
        <end position="92"/>
    </location>
</feature>
<feature type="domain" description="SpoVT-AbrB" evidence="1">
    <location>
        <begin position="5"/>
        <end position="50"/>
    </location>
</feature>
<feature type="strand" evidence="3">
    <location>
        <begin position="12"/>
        <end position="17"/>
    </location>
</feature>
<feature type="helix" evidence="3">
    <location>
        <begin position="20"/>
        <end position="25"/>
    </location>
</feature>
<feature type="strand" evidence="3">
    <location>
        <begin position="29"/>
        <end position="31"/>
    </location>
</feature>
<feature type="strand" evidence="3">
    <location>
        <begin position="34"/>
        <end position="39"/>
    </location>
</feature>
<feature type="strand" evidence="3">
    <location>
        <begin position="42"/>
        <end position="46"/>
    </location>
</feature>
<feature type="strand" evidence="3">
    <location>
        <begin position="48"/>
        <end position="50"/>
    </location>
</feature>
<proteinExistence type="evidence at protein level"/>
<gene>
    <name type="primary">abh</name>
    <name type="synonym">ylxT</name>
    <name type="synonym">yzaA</name>
    <name type="ordered locus">BSU14480</name>
</gene>